<name>DGTP_YERPE</name>
<sequence>MSGIDFKQKISFQRPFSKPSSAEDEYEITRVFESDRGRIVNSAAIRRLQQKTQVFPLERNAAVRSRLTHSLEVQQVGRYIAKEILNRFKQDKKITAYGLDKLLDPFESIVEMACLMHDIGNPPFGHFGESAINDWFTKRMDPNGGSGSEPQSTDQCQVDVLKLCEGETELNILRSKIRHDLSQFEGNAQAIRLVHSLLKLNLTYAQVGCILKYTKPAYWSAPIPASHNYLMKKPGFYLAEENYVKELRRELNMEEFDRFPLTYIMEAADDISYCIADLEDAVEKNIFSVEQLYDHMSQEWGAVTPGDLFDKVVGAAFRQLGREQGRRSSEDQFFMYLRVNTVGKLVPHAAQRFIENLPAVFSGSFNQALLEDSSAACKLLQIFKRVAVKHVFNHPEVEQLELQGYRVISGLLDIYSPLLAMPETAFTQLVADDRHRKYPIETRLFHKLSIKHRLAYAESAERIRNLPSEQYEIYEYYYRARLIQDYISGMTDLYAYDEYRRLMAAE</sequence>
<keyword id="KW-0378">Hydrolase</keyword>
<keyword id="KW-0460">Magnesium</keyword>
<keyword id="KW-1185">Reference proteome</keyword>
<dbReference type="EC" id="3.1.5.1" evidence="1"/>
<dbReference type="EMBL" id="AL590842">
    <property type="protein sequence ID" value="CAL21972.1"/>
    <property type="molecule type" value="Genomic_DNA"/>
</dbReference>
<dbReference type="EMBL" id="AE009952">
    <property type="protein sequence ID" value="AAM84393.1"/>
    <property type="molecule type" value="Genomic_DNA"/>
</dbReference>
<dbReference type="EMBL" id="AE017042">
    <property type="protein sequence ID" value="AAS60577.1"/>
    <property type="molecule type" value="Genomic_DNA"/>
</dbReference>
<dbReference type="PIR" id="AI0410">
    <property type="entry name" value="AI0410"/>
</dbReference>
<dbReference type="RefSeq" id="WP_002209369.1">
    <property type="nucleotide sequence ID" value="NZ_WUCM01000008.1"/>
</dbReference>
<dbReference type="RefSeq" id="YP_002348275.1">
    <property type="nucleotide sequence ID" value="NC_003143.1"/>
</dbReference>
<dbReference type="SMR" id="Q8ZBM5"/>
<dbReference type="IntAct" id="Q8ZBM5">
    <property type="interactions" value="3"/>
</dbReference>
<dbReference type="STRING" id="214092.YPO3383"/>
<dbReference type="PaxDb" id="214092-YPO3383"/>
<dbReference type="DNASU" id="1145753"/>
<dbReference type="EnsemblBacteria" id="AAS60577">
    <property type="protein sequence ID" value="AAS60577"/>
    <property type="gene ID" value="YP_0302"/>
</dbReference>
<dbReference type="GeneID" id="57975326"/>
<dbReference type="KEGG" id="ype:YPO3383"/>
<dbReference type="KEGG" id="ypk:y0806"/>
<dbReference type="KEGG" id="ypm:YP_0302"/>
<dbReference type="PATRIC" id="fig|214092.21.peg.3864"/>
<dbReference type="eggNOG" id="COG0232">
    <property type="taxonomic scope" value="Bacteria"/>
</dbReference>
<dbReference type="HOGENOM" id="CLU_028163_2_1_6"/>
<dbReference type="OMA" id="ICYTIID"/>
<dbReference type="OrthoDB" id="9803619at2"/>
<dbReference type="Proteomes" id="UP000000815">
    <property type="component" value="Chromosome"/>
</dbReference>
<dbReference type="Proteomes" id="UP000001019">
    <property type="component" value="Chromosome"/>
</dbReference>
<dbReference type="Proteomes" id="UP000002490">
    <property type="component" value="Chromosome"/>
</dbReference>
<dbReference type="GO" id="GO:0008832">
    <property type="term" value="F:dGTPase activity"/>
    <property type="evidence" value="ECO:0000318"/>
    <property type="project" value="GO_Central"/>
</dbReference>
<dbReference type="GO" id="GO:0000287">
    <property type="term" value="F:magnesium ion binding"/>
    <property type="evidence" value="ECO:0007669"/>
    <property type="project" value="UniProtKB-UniRule"/>
</dbReference>
<dbReference type="GO" id="GO:0006203">
    <property type="term" value="P:dGTP catabolic process"/>
    <property type="evidence" value="ECO:0000318"/>
    <property type="project" value="GO_Central"/>
</dbReference>
<dbReference type="CDD" id="cd00077">
    <property type="entry name" value="HDc"/>
    <property type="match status" value="1"/>
</dbReference>
<dbReference type="FunFam" id="1.10.3210.10:FF:000009">
    <property type="entry name" value="Deoxyguanosinetriphosphate triphosphohydrolase"/>
    <property type="match status" value="1"/>
</dbReference>
<dbReference type="FunFam" id="1.10.3210.10:FF:000010">
    <property type="entry name" value="Deoxyguanosinetriphosphate triphosphohydrolase"/>
    <property type="match status" value="1"/>
</dbReference>
<dbReference type="FunFam" id="1.10.3410.10:FF:000001">
    <property type="entry name" value="Deoxyguanosinetriphosphate triphosphohydrolase"/>
    <property type="match status" value="1"/>
</dbReference>
<dbReference type="Gene3D" id="1.10.3210.10">
    <property type="entry name" value="Hypothetical protein af1432"/>
    <property type="match status" value="2"/>
</dbReference>
<dbReference type="Gene3D" id="1.10.3410.10">
    <property type="entry name" value="putative deoxyguanosinetriphosphate triphosphohydrolase like domain"/>
    <property type="match status" value="1"/>
</dbReference>
<dbReference type="HAMAP" id="MF_00030">
    <property type="entry name" value="dGTPase_type1"/>
    <property type="match status" value="1"/>
</dbReference>
<dbReference type="InterPro" id="IPR023293">
    <property type="entry name" value="dGTP_triP_hydro_central_sf"/>
</dbReference>
<dbReference type="InterPro" id="IPR006261">
    <property type="entry name" value="dGTPase"/>
</dbReference>
<dbReference type="InterPro" id="IPR050135">
    <property type="entry name" value="dGTPase-like"/>
</dbReference>
<dbReference type="InterPro" id="IPR020779">
    <property type="entry name" value="dNTPase_1"/>
</dbReference>
<dbReference type="InterPro" id="IPR003607">
    <property type="entry name" value="HD/PDEase_dom"/>
</dbReference>
<dbReference type="InterPro" id="IPR006674">
    <property type="entry name" value="HD_domain"/>
</dbReference>
<dbReference type="InterPro" id="IPR026875">
    <property type="entry name" value="PHydrolase_assoc_dom"/>
</dbReference>
<dbReference type="NCBIfam" id="TIGR01353">
    <property type="entry name" value="dGTP_triPase"/>
    <property type="match status" value="1"/>
</dbReference>
<dbReference type="NCBIfam" id="NF003429">
    <property type="entry name" value="PRK04926.1"/>
    <property type="match status" value="1"/>
</dbReference>
<dbReference type="PANTHER" id="PTHR11373:SF32">
    <property type="entry name" value="DEOXYGUANOSINETRIPHOSPHATE TRIPHOSPHOHYDROLASE"/>
    <property type="match status" value="1"/>
</dbReference>
<dbReference type="PANTHER" id="PTHR11373">
    <property type="entry name" value="DEOXYNUCLEOSIDE TRIPHOSPHATE TRIPHOSPHOHYDROLASE"/>
    <property type="match status" value="1"/>
</dbReference>
<dbReference type="Pfam" id="PF01966">
    <property type="entry name" value="HD"/>
    <property type="match status" value="1"/>
</dbReference>
<dbReference type="Pfam" id="PF13286">
    <property type="entry name" value="HD_assoc"/>
    <property type="match status" value="1"/>
</dbReference>
<dbReference type="SMART" id="SM00471">
    <property type="entry name" value="HDc"/>
    <property type="match status" value="1"/>
</dbReference>
<dbReference type="SUPFAM" id="SSF109604">
    <property type="entry name" value="HD-domain/PDEase-like"/>
    <property type="match status" value="1"/>
</dbReference>
<dbReference type="PROSITE" id="PS51831">
    <property type="entry name" value="HD"/>
    <property type="match status" value="1"/>
</dbReference>
<accession>Q8ZBM5</accession>
<accession>Q0WBR3</accession>
<protein>
    <recommendedName>
        <fullName evidence="1">Deoxyguanosinetriphosphate triphosphohydrolase</fullName>
        <shortName evidence="1">dGTP triphosphohydrolase</shortName>
        <shortName evidence="1">dGTPase</shortName>
        <ecNumber evidence="1">3.1.5.1</ecNumber>
    </recommendedName>
</protein>
<comment type="function">
    <text evidence="1">dGTPase preferentially hydrolyzes dGTP over the other canonical NTPs.</text>
</comment>
<comment type="catalytic activity">
    <reaction evidence="1">
        <text>dGTP + H2O = 2'-deoxyguanosine + triphosphate + H(+)</text>
        <dbReference type="Rhea" id="RHEA:15193"/>
        <dbReference type="ChEBI" id="CHEBI:15377"/>
        <dbReference type="ChEBI" id="CHEBI:15378"/>
        <dbReference type="ChEBI" id="CHEBI:17172"/>
        <dbReference type="ChEBI" id="CHEBI:18036"/>
        <dbReference type="ChEBI" id="CHEBI:61429"/>
        <dbReference type="EC" id="3.1.5.1"/>
    </reaction>
</comment>
<comment type="cofactor">
    <cofactor evidence="1">
        <name>Mg(2+)</name>
        <dbReference type="ChEBI" id="CHEBI:18420"/>
    </cofactor>
</comment>
<comment type="subunit">
    <text evidence="1">Homotetramer.</text>
</comment>
<comment type="similarity">
    <text evidence="1">Belongs to the dGTPase family. Type 1 subfamily.</text>
</comment>
<proteinExistence type="inferred from homology"/>
<reference key="1">
    <citation type="journal article" date="2001" name="Nature">
        <title>Genome sequence of Yersinia pestis, the causative agent of plague.</title>
        <authorList>
            <person name="Parkhill J."/>
            <person name="Wren B.W."/>
            <person name="Thomson N.R."/>
            <person name="Titball R.W."/>
            <person name="Holden M.T.G."/>
            <person name="Prentice M.B."/>
            <person name="Sebaihia M."/>
            <person name="James K.D."/>
            <person name="Churcher C.M."/>
            <person name="Mungall K.L."/>
            <person name="Baker S."/>
            <person name="Basham D."/>
            <person name="Bentley S.D."/>
            <person name="Brooks K."/>
            <person name="Cerdeno-Tarraga A.-M."/>
            <person name="Chillingworth T."/>
            <person name="Cronin A."/>
            <person name="Davies R.M."/>
            <person name="Davis P."/>
            <person name="Dougan G."/>
            <person name="Feltwell T."/>
            <person name="Hamlin N."/>
            <person name="Holroyd S."/>
            <person name="Jagels K."/>
            <person name="Karlyshev A.V."/>
            <person name="Leather S."/>
            <person name="Moule S."/>
            <person name="Oyston P.C.F."/>
            <person name="Quail M.A."/>
            <person name="Rutherford K.M."/>
            <person name="Simmonds M."/>
            <person name="Skelton J."/>
            <person name="Stevens K."/>
            <person name="Whitehead S."/>
            <person name="Barrell B.G."/>
        </authorList>
    </citation>
    <scope>NUCLEOTIDE SEQUENCE [LARGE SCALE GENOMIC DNA]</scope>
    <source>
        <strain>CO-92 / Biovar Orientalis</strain>
    </source>
</reference>
<reference key="2">
    <citation type="journal article" date="2002" name="J. Bacteriol.">
        <title>Genome sequence of Yersinia pestis KIM.</title>
        <authorList>
            <person name="Deng W."/>
            <person name="Burland V."/>
            <person name="Plunkett G. III"/>
            <person name="Boutin A."/>
            <person name="Mayhew G.F."/>
            <person name="Liss P."/>
            <person name="Perna N.T."/>
            <person name="Rose D.J."/>
            <person name="Mau B."/>
            <person name="Zhou S."/>
            <person name="Schwartz D.C."/>
            <person name="Fetherston J.D."/>
            <person name="Lindler L.E."/>
            <person name="Brubaker R.R."/>
            <person name="Plano G.V."/>
            <person name="Straley S.C."/>
            <person name="McDonough K.A."/>
            <person name="Nilles M.L."/>
            <person name="Matson J.S."/>
            <person name="Blattner F.R."/>
            <person name="Perry R.D."/>
        </authorList>
    </citation>
    <scope>NUCLEOTIDE SEQUENCE [LARGE SCALE GENOMIC DNA]</scope>
    <source>
        <strain>KIM10+ / Biovar Mediaevalis</strain>
    </source>
</reference>
<reference key="3">
    <citation type="journal article" date="2004" name="DNA Res.">
        <title>Complete genome sequence of Yersinia pestis strain 91001, an isolate avirulent to humans.</title>
        <authorList>
            <person name="Song Y."/>
            <person name="Tong Z."/>
            <person name="Wang J."/>
            <person name="Wang L."/>
            <person name="Guo Z."/>
            <person name="Han Y."/>
            <person name="Zhang J."/>
            <person name="Pei D."/>
            <person name="Zhou D."/>
            <person name="Qin H."/>
            <person name="Pang X."/>
            <person name="Han Y."/>
            <person name="Zhai J."/>
            <person name="Li M."/>
            <person name="Cui B."/>
            <person name="Qi Z."/>
            <person name="Jin L."/>
            <person name="Dai R."/>
            <person name="Chen F."/>
            <person name="Li S."/>
            <person name="Ye C."/>
            <person name="Du Z."/>
            <person name="Lin W."/>
            <person name="Wang J."/>
            <person name="Yu J."/>
            <person name="Yang H."/>
            <person name="Wang J."/>
            <person name="Huang P."/>
            <person name="Yang R."/>
        </authorList>
    </citation>
    <scope>NUCLEOTIDE SEQUENCE [LARGE SCALE GENOMIC DNA]</scope>
    <source>
        <strain>91001 / Biovar Mediaevalis</strain>
    </source>
</reference>
<gene>
    <name evidence="1" type="primary">dgt</name>
    <name type="ordered locus">YPO3383</name>
    <name type="ordered locus">y0806</name>
    <name type="ordered locus">YP_0302</name>
</gene>
<evidence type="ECO:0000255" key="1">
    <source>
        <dbReference type="HAMAP-Rule" id="MF_00030"/>
    </source>
</evidence>
<evidence type="ECO:0000255" key="2">
    <source>
        <dbReference type="PROSITE-ProRule" id="PRU01175"/>
    </source>
</evidence>
<feature type="chain" id="PRO_0000205288" description="Deoxyguanosinetriphosphate triphosphohydrolase">
    <location>
        <begin position="1"/>
        <end position="506"/>
    </location>
</feature>
<feature type="domain" description="HD" evidence="2">
    <location>
        <begin position="66"/>
        <end position="274"/>
    </location>
</feature>
<organism>
    <name type="scientific">Yersinia pestis</name>
    <dbReference type="NCBI Taxonomy" id="632"/>
    <lineage>
        <taxon>Bacteria</taxon>
        <taxon>Pseudomonadati</taxon>
        <taxon>Pseudomonadota</taxon>
        <taxon>Gammaproteobacteria</taxon>
        <taxon>Enterobacterales</taxon>
        <taxon>Yersiniaceae</taxon>
        <taxon>Yersinia</taxon>
    </lineage>
</organism>